<name>RR14_LEPVR</name>
<gene>
    <name evidence="1" type="primary">rps14</name>
</gene>
<accession>A4QLA4</accession>
<keyword id="KW-0150">Chloroplast</keyword>
<keyword id="KW-0934">Plastid</keyword>
<keyword id="KW-0687">Ribonucleoprotein</keyword>
<keyword id="KW-0689">Ribosomal protein</keyword>
<keyword id="KW-0694">RNA-binding</keyword>
<keyword id="KW-0699">rRNA-binding</keyword>
<organism>
    <name type="scientific">Lepidium virginicum</name>
    <name type="common">Virginia pepperweed</name>
    <dbReference type="NCBI Taxonomy" id="59292"/>
    <lineage>
        <taxon>Eukaryota</taxon>
        <taxon>Viridiplantae</taxon>
        <taxon>Streptophyta</taxon>
        <taxon>Embryophyta</taxon>
        <taxon>Tracheophyta</taxon>
        <taxon>Spermatophyta</taxon>
        <taxon>Magnoliopsida</taxon>
        <taxon>eudicotyledons</taxon>
        <taxon>Gunneridae</taxon>
        <taxon>Pentapetalae</taxon>
        <taxon>rosids</taxon>
        <taxon>malvids</taxon>
        <taxon>Brassicales</taxon>
        <taxon>Brassicaceae</taxon>
        <taxon>Lepidieae</taxon>
        <taxon>Lepidium</taxon>
    </lineage>
</organism>
<proteinExistence type="inferred from homology"/>
<geneLocation type="chloroplast"/>
<evidence type="ECO:0000255" key="1">
    <source>
        <dbReference type="HAMAP-Rule" id="MF_00537"/>
    </source>
</evidence>
<evidence type="ECO:0000305" key="2"/>
<dbReference type="EMBL" id="AP009374">
    <property type="protein sequence ID" value="BAF50459.1"/>
    <property type="molecule type" value="Genomic_DNA"/>
</dbReference>
<dbReference type="RefSeq" id="YP_001123635.1">
    <property type="nucleotide sequence ID" value="NC_009273.1"/>
</dbReference>
<dbReference type="SMR" id="A4QLA4"/>
<dbReference type="GeneID" id="4962021"/>
<dbReference type="GO" id="GO:0009507">
    <property type="term" value="C:chloroplast"/>
    <property type="evidence" value="ECO:0007669"/>
    <property type="project" value="UniProtKB-SubCell"/>
</dbReference>
<dbReference type="GO" id="GO:0015935">
    <property type="term" value="C:small ribosomal subunit"/>
    <property type="evidence" value="ECO:0007669"/>
    <property type="project" value="TreeGrafter"/>
</dbReference>
<dbReference type="GO" id="GO:0019843">
    <property type="term" value="F:rRNA binding"/>
    <property type="evidence" value="ECO:0007669"/>
    <property type="project" value="UniProtKB-UniRule"/>
</dbReference>
<dbReference type="GO" id="GO:0003735">
    <property type="term" value="F:structural constituent of ribosome"/>
    <property type="evidence" value="ECO:0007669"/>
    <property type="project" value="InterPro"/>
</dbReference>
<dbReference type="GO" id="GO:0006412">
    <property type="term" value="P:translation"/>
    <property type="evidence" value="ECO:0007669"/>
    <property type="project" value="UniProtKB-UniRule"/>
</dbReference>
<dbReference type="FunFam" id="1.10.287.1480:FF:000001">
    <property type="entry name" value="30S ribosomal protein S14"/>
    <property type="match status" value="1"/>
</dbReference>
<dbReference type="Gene3D" id="1.10.287.1480">
    <property type="match status" value="1"/>
</dbReference>
<dbReference type="HAMAP" id="MF_00537">
    <property type="entry name" value="Ribosomal_uS14_1"/>
    <property type="match status" value="1"/>
</dbReference>
<dbReference type="InterPro" id="IPR001209">
    <property type="entry name" value="Ribosomal_uS14"/>
</dbReference>
<dbReference type="InterPro" id="IPR023036">
    <property type="entry name" value="Ribosomal_uS14_bac/plastid"/>
</dbReference>
<dbReference type="InterPro" id="IPR018271">
    <property type="entry name" value="Ribosomal_uS14_CS"/>
</dbReference>
<dbReference type="NCBIfam" id="NF006477">
    <property type="entry name" value="PRK08881.1"/>
    <property type="match status" value="1"/>
</dbReference>
<dbReference type="PANTHER" id="PTHR19836">
    <property type="entry name" value="30S RIBOSOMAL PROTEIN S14"/>
    <property type="match status" value="1"/>
</dbReference>
<dbReference type="PANTHER" id="PTHR19836:SF19">
    <property type="entry name" value="SMALL RIBOSOMAL SUBUNIT PROTEIN US14M"/>
    <property type="match status" value="1"/>
</dbReference>
<dbReference type="Pfam" id="PF00253">
    <property type="entry name" value="Ribosomal_S14"/>
    <property type="match status" value="1"/>
</dbReference>
<dbReference type="SUPFAM" id="SSF57716">
    <property type="entry name" value="Glucocorticoid receptor-like (DNA-binding domain)"/>
    <property type="match status" value="1"/>
</dbReference>
<dbReference type="PROSITE" id="PS00527">
    <property type="entry name" value="RIBOSOMAL_S14"/>
    <property type="match status" value="1"/>
</dbReference>
<feature type="chain" id="PRO_0000354422" description="Small ribosomal subunit protein uS14c">
    <location>
        <begin position="1"/>
        <end position="100"/>
    </location>
</feature>
<protein>
    <recommendedName>
        <fullName evidence="1">Small ribosomal subunit protein uS14c</fullName>
    </recommendedName>
    <alternativeName>
        <fullName evidence="2">30S ribosomal protein S14, chloroplastic</fullName>
    </alternativeName>
</protein>
<comment type="function">
    <text evidence="1">Binds 16S rRNA, required for the assembly of 30S particles.</text>
</comment>
<comment type="subunit">
    <text evidence="1">Part of the 30S ribosomal subunit.</text>
</comment>
<comment type="subcellular location">
    <subcellularLocation>
        <location>Plastid</location>
        <location>Chloroplast</location>
    </subcellularLocation>
</comment>
<comment type="similarity">
    <text evidence="1">Belongs to the universal ribosomal protein uS14 family.</text>
</comment>
<sequence>MAKKSLIYREKKRQKLEKKYHLIRRSSKKEISQIPSLSEKWKIHGKLQSPPRNSAPTRLHRRCFSTGRPRANYRDFGLSGHILREMVQACLLPGATRSSW</sequence>
<reference key="1">
    <citation type="submission" date="2007-03" db="EMBL/GenBank/DDBJ databases">
        <title>Sequencing analysis of Lepidium virginicum JO26 chloroplast DNA.</title>
        <authorList>
            <person name="Hosouchi T."/>
            <person name="Tsuruoka H."/>
            <person name="Kotani H."/>
        </authorList>
    </citation>
    <scope>NUCLEOTIDE SEQUENCE [LARGE SCALE GENOMIC DNA]</scope>
</reference>